<feature type="chain" id="PRO_0000354127" description="Photosystem I reaction center subunit IX">
    <location>
        <begin position="1"/>
        <end position="42"/>
    </location>
</feature>
<feature type="transmembrane region" description="Helical" evidence="1">
    <location>
        <begin position="7"/>
        <end position="27"/>
    </location>
</feature>
<keyword id="KW-0472">Membrane</keyword>
<keyword id="KW-0934">Plastid</keyword>
<keyword id="KW-0812">Transmembrane</keyword>
<keyword id="KW-1133">Transmembrane helix</keyword>
<organism>
    <name type="scientific">Aneura mirabilis</name>
    <name type="common">Parasitic liverwort</name>
    <name type="synonym">Cryptothallus mirabilis</name>
    <dbReference type="NCBI Taxonomy" id="280810"/>
    <lineage>
        <taxon>Eukaryota</taxon>
        <taxon>Viridiplantae</taxon>
        <taxon>Streptophyta</taxon>
        <taxon>Embryophyta</taxon>
        <taxon>Marchantiophyta</taxon>
        <taxon>Jungermanniopsida</taxon>
        <taxon>Metzgeriidae</taxon>
        <taxon>Metzgeriales</taxon>
        <taxon>Aneuraceae</taxon>
        <taxon>Aneura</taxon>
    </lineage>
</organism>
<protein>
    <recommendedName>
        <fullName evidence="1">Photosystem I reaction center subunit IX</fullName>
    </recommendedName>
    <alternativeName>
        <fullName evidence="1">PSI-J</fullName>
    </alternativeName>
</protein>
<sequence length="42" mass="4682">MQDAKTYLSIAPVLATLWFGFLVGSLIEINRFFPNALILPSL</sequence>
<reference key="1">
    <citation type="journal article" date="2008" name="Mol. Biol. Evol.">
        <title>Functional gene losses occur with minimal size reduction in the plastid genome of the parasitic liverwort Aneura mirabilis.</title>
        <authorList>
            <person name="Wickett N.J."/>
            <person name="Zhang Y."/>
            <person name="Hansen S.K."/>
            <person name="Roper J.M."/>
            <person name="Kuehl J.V."/>
            <person name="Plock S.A."/>
            <person name="Wolf P.G."/>
            <person name="dePamphilis C.W."/>
            <person name="Boore J.L."/>
            <person name="Goffinet B."/>
        </authorList>
    </citation>
    <scope>NUCLEOTIDE SEQUENCE [LARGE SCALE GENOMIC DNA]</scope>
</reference>
<name>PSAJ_ANEMR</name>
<proteinExistence type="inferred from homology"/>
<accession>B0YPP8</accession>
<evidence type="ECO:0000255" key="1">
    <source>
        <dbReference type="HAMAP-Rule" id="MF_00522"/>
    </source>
</evidence>
<evidence type="ECO:0000305" key="2"/>
<gene>
    <name evidence="1" type="primary">psaJ</name>
</gene>
<geneLocation type="non-photosynthetic plastid"/>
<dbReference type="EMBL" id="EU043314">
    <property type="protein sequence ID" value="ABS54495.1"/>
    <property type="molecule type" value="Genomic_DNA"/>
</dbReference>
<dbReference type="RefSeq" id="YP_001687234.1">
    <property type="nucleotide sequence ID" value="NC_010359.1"/>
</dbReference>
<dbReference type="SMR" id="B0YPP8"/>
<dbReference type="GeneID" id="5952209"/>
<dbReference type="GO" id="GO:0009522">
    <property type="term" value="C:photosystem I"/>
    <property type="evidence" value="ECO:0007669"/>
    <property type="project" value="InterPro"/>
</dbReference>
<dbReference type="GO" id="GO:0042170">
    <property type="term" value="C:plastid membrane"/>
    <property type="evidence" value="ECO:0007669"/>
    <property type="project" value="UniProtKB-SubCell"/>
</dbReference>
<dbReference type="GO" id="GO:0042651">
    <property type="term" value="C:thylakoid membrane"/>
    <property type="evidence" value="ECO:0007669"/>
    <property type="project" value="UniProtKB-UniRule"/>
</dbReference>
<dbReference type="Gene3D" id="1.20.5.510">
    <property type="entry name" value="Single helix bin"/>
    <property type="match status" value="1"/>
</dbReference>
<dbReference type="HAMAP" id="MF_00522">
    <property type="entry name" value="PSI_PsaJ"/>
    <property type="match status" value="1"/>
</dbReference>
<dbReference type="InterPro" id="IPR002615">
    <property type="entry name" value="PSI_PsaJ"/>
</dbReference>
<dbReference type="InterPro" id="IPR036062">
    <property type="entry name" value="PSI_PsaJ_sf"/>
</dbReference>
<dbReference type="PANTHER" id="PTHR36082">
    <property type="match status" value="1"/>
</dbReference>
<dbReference type="PANTHER" id="PTHR36082:SF2">
    <property type="entry name" value="PHOTOSYSTEM I REACTION CENTER SUBUNIT IX"/>
    <property type="match status" value="1"/>
</dbReference>
<dbReference type="Pfam" id="PF01701">
    <property type="entry name" value="PSI_PsaJ"/>
    <property type="match status" value="1"/>
</dbReference>
<dbReference type="SUPFAM" id="SSF81544">
    <property type="entry name" value="Subunit IX of photosystem I reaction centre, PsaJ"/>
    <property type="match status" value="1"/>
</dbReference>
<comment type="function">
    <text evidence="1">May help in the organization of the PsaE and PsaF subunits.</text>
</comment>
<comment type="subcellular location">
    <subcellularLocation>
        <location evidence="2">Plastid membrane</location>
        <topology evidence="1">Single-pass membrane protein</topology>
    </subcellularLocation>
</comment>
<comment type="similarity">
    <text evidence="1">Belongs to the PsaJ family.</text>
</comment>
<comment type="caution">
    <text evidence="2">This organism being non-photosynthetic, the role of this protein is uncertain.</text>
</comment>